<keyword id="KW-0067">ATP-binding</keyword>
<keyword id="KW-0520">NAD</keyword>
<keyword id="KW-0547">Nucleotide-binding</keyword>
<keyword id="KW-0548">Nucleotidyltransferase</keyword>
<keyword id="KW-0662">Pyridine nucleotide biosynthesis</keyword>
<keyword id="KW-0808">Transferase</keyword>
<protein>
    <recommendedName>
        <fullName evidence="1">Probable nicotinate-nucleotide adenylyltransferase</fullName>
        <ecNumber evidence="1">2.7.7.18</ecNumber>
    </recommendedName>
    <alternativeName>
        <fullName evidence="1">Deamido-NAD(+) diphosphorylase</fullName>
    </alternativeName>
    <alternativeName>
        <fullName evidence="1">Deamido-NAD(+) pyrophosphorylase</fullName>
    </alternativeName>
    <alternativeName>
        <fullName evidence="1">Nicotinate mononucleotide adenylyltransferase</fullName>
        <shortName evidence="1">NaMN adenylyltransferase</shortName>
    </alternativeName>
</protein>
<proteinExistence type="inferred from homology"/>
<accession>B1H028</accession>
<organism>
    <name type="scientific">Endomicrobium trichonymphae</name>
    <dbReference type="NCBI Taxonomy" id="1408204"/>
    <lineage>
        <taxon>Bacteria</taxon>
        <taxon>Pseudomonadati</taxon>
        <taxon>Elusimicrobiota</taxon>
        <taxon>Endomicrobiia</taxon>
        <taxon>Endomicrobiales</taxon>
        <taxon>Endomicrobiaceae</taxon>
        <taxon>Candidatus Endomicrobiellum</taxon>
    </lineage>
</organism>
<feature type="chain" id="PRO_1000125361" description="Probable nicotinate-nucleotide adenylyltransferase">
    <location>
        <begin position="1"/>
        <end position="193"/>
    </location>
</feature>
<evidence type="ECO:0000255" key="1">
    <source>
        <dbReference type="HAMAP-Rule" id="MF_00244"/>
    </source>
</evidence>
<sequence length="193" mass="22655">MHKVAIFGGSFDPVHKSHIQIAKLAFKSLDLKKMIFVIAYTPPHKTKQYAYIEDRISMLKLATGNMQKTEISLYEAQKLETVYSYQTLDYFNSLYPEDEIYMVIGSDSLLDLPIWNNIDYMAGRYKFIVAKRHGFDEVNKNVKYLDRCVFIDKETEDISSTEIRRLVKEDYKKAVSMLNKKVYNYIIQNGLYK</sequence>
<dbReference type="EC" id="2.7.7.18" evidence="1"/>
<dbReference type="EMBL" id="AP009510">
    <property type="protein sequence ID" value="BAG13860.1"/>
    <property type="molecule type" value="Genomic_DNA"/>
</dbReference>
<dbReference type="RefSeq" id="WP_015423387.1">
    <property type="nucleotide sequence ID" value="NC_020419.1"/>
</dbReference>
<dbReference type="SMR" id="B1H028"/>
<dbReference type="STRING" id="471821.TGRD_377"/>
<dbReference type="KEGG" id="eti:RSTT_350"/>
<dbReference type="KEGG" id="rsd:TGRD_377"/>
<dbReference type="PATRIC" id="fig|471821.5.peg.611"/>
<dbReference type="HOGENOM" id="CLU_069765_3_2_0"/>
<dbReference type="OrthoDB" id="5295945at2"/>
<dbReference type="UniPathway" id="UPA00253">
    <property type="reaction ID" value="UER00332"/>
</dbReference>
<dbReference type="Proteomes" id="UP000001691">
    <property type="component" value="Chromosome"/>
</dbReference>
<dbReference type="GO" id="GO:0005524">
    <property type="term" value="F:ATP binding"/>
    <property type="evidence" value="ECO:0007669"/>
    <property type="project" value="UniProtKB-KW"/>
</dbReference>
<dbReference type="GO" id="GO:0004515">
    <property type="term" value="F:nicotinate-nucleotide adenylyltransferase activity"/>
    <property type="evidence" value="ECO:0007669"/>
    <property type="project" value="UniProtKB-UniRule"/>
</dbReference>
<dbReference type="GO" id="GO:0009435">
    <property type="term" value="P:NAD biosynthetic process"/>
    <property type="evidence" value="ECO:0007669"/>
    <property type="project" value="UniProtKB-UniRule"/>
</dbReference>
<dbReference type="CDD" id="cd02165">
    <property type="entry name" value="NMNAT"/>
    <property type="match status" value="1"/>
</dbReference>
<dbReference type="Gene3D" id="3.40.50.620">
    <property type="entry name" value="HUPs"/>
    <property type="match status" value="1"/>
</dbReference>
<dbReference type="HAMAP" id="MF_00244">
    <property type="entry name" value="NaMN_adenylyltr"/>
    <property type="match status" value="1"/>
</dbReference>
<dbReference type="InterPro" id="IPR004821">
    <property type="entry name" value="Cyt_trans-like"/>
</dbReference>
<dbReference type="InterPro" id="IPR005248">
    <property type="entry name" value="NadD/NMNAT"/>
</dbReference>
<dbReference type="InterPro" id="IPR014729">
    <property type="entry name" value="Rossmann-like_a/b/a_fold"/>
</dbReference>
<dbReference type="NCBIfam" id="TIGR00125">
    <property type="entry name" value="cyt_tran_rel"/>
    <property type="match status" value="1"/>
</dbReference>
<dbReference type="NCBIfam" id="TIGR00482">
    <property type="entry name" value="nicotinate (nicotinamide) nucleotide adenylyltransferase"/>
    <property type="match status" value="1"/>
</dbReference>
<dbReference type="PANTHER" id="PTHR39321">
    <property type="entry name" value="NICOTINATE-NUCLEOTIDE ADENYLYLTRANSFERASE-RELATED"/>
    <property type="match status" value="1"/>
</dbReference>
<dbReference type="PANTHER" id="PTHR39321:SF3">
    <property type="entry name" value="PHOSPHOPANTETHEINE ADENYLYLTRANSFERASE"/>
    <property type="match status" value="1"/>
</dbReference>
<dbReference type="Pfam" id="PF01467">
    <property type="entry name" value="CTP_transf_like"/>
    <property type="match status" value="1"/>
</dbReference>
<dbReference type="SUPFAM" id="SSF52374">
    <property type="entry name" value="Nucleotidylyl transferase"/>
    <property type="match status" value="1"/>
</dbReference>
<reference key="1">
    <citation type="journal article" date="2008" name="Proc. Natl. Acad. Sci. U.S.A.">
        <title>Complete genome of the uncultured termite group 1 bacteria in a single host protist cell.</title>
        <authorList>
            <person name="Hongoh Y."/>
            <person name="Sharma V.K."/>
            <person name="Prakash T."/>
            <person name="Noda S."/>
            <person name="Taylor T.D."/>
            <person name="Kudo T."/>
            <person name="Sakaki Y."/>
            <person name="Toyoda A."/>
            <person name="Hattori M."/>
            <person name="Ohkuma M."/>
        </authorList>
    </citation>
    <scope>NUCLEOTIDE SEQUENCE [LARGE SCALE GENOMIC DNA]</scope>
</reference>
<name>NADD_ENDTX</name>
<comment type="function">
    <text evidence="1">Catalyzes the reversible adenylation of nicotinate mononucleotide (NaMN) to nicotinic acid adenine dinucleotide (NaAD).</text>
</comment>
<comment type="catalytic activity">
    <reaction evidence="1">
        <text>nicotinate beta-D-ribonucleotide + ATP + H(+) = deamido-NAD(+) + diphosphate</text>
        <dbReference type="Rhea" id="RHEA:22860"/>
        <dbReference type="ChEBI" id="CHEBI:15378"/>
        <dbReference type="ChEBI" id="CHEBI:30616"/>
        <dbReference type="ChEBI" id="CHEBI:33019"/>
        <dbReference type="ChEBI" id="CHEBI:57502"/>
        <dbReference type="ChEBI" id="CHEBI:58437"/>
        <dbReference type="EC" id="2.7.7.18"/>
    </reaction>
</comment>
<comment type="pathway">
    <text evidence="1">Cofactor biosynthesis; NAD(+) biosynthesis; deamido-NAD(+) from nicotinate D-ribonucleotide: step 1/1.</text>
</comment>
<comment type="similarity">
    <text evidence="1">Belongs to the NadD family.</text>
</comment>
<gene>
    <name evidence="1" type="primary">nadD</name>
    <name type="ordered locus">TGRD_377</name>
</gene>